<feature type="chain" id="PRO_0000169069" description="Uncharacterized protein YecA">
    <location>
        <begin position="1"/>
        <end position="221"/>
    </location>
</feature>
<feature type="sequence conflict" description="In Ref. 4." evidence="1" ref="4">
    <original>FM</original>
    <variation>AL</variation>
    <location>
        <begin position="75"/>
        <end position="76"/>
    </location>
</feature>
<dbReference type="EMBL" id="U00096">
    <property type="protein sequence ID" value="AAC74978.1"/>
    <property type="molecule type" value="Genomic_DNA"/>
</dbReference>
<dbReference type="EMBL" id="AP009048">
    <property type="protein sequence ID" value="BAA15731.1"/>
    <property type="molecule type" value="Genomic_DNA"/>
</dbReference>
<dbReference type="EMBL" id="X03239">
    <property type="protein sequence ID" value="CAA26984.1"/>
    <property type="molecule type" value="Genomic_DNA"/>
</dbReference>
<dbReference type="PIR" id="D64954">
    <property type="entry name" value="QQECW7"/>
</dbReference>
<dbReference type="RefSeq" id="NP_416421.1">
    <property type="nucleotide sequence ID" value="NC_000913.3"/>
</dbReference>
<dbReference type="RefSeq" id="WP_000847902.1">
    <property type="nucleotide sequence ID" value="NZ_STEB01000026.1"/>
</dbReference>
<dbReference type="SMR" id="P0AD05"/>
<dbReference type="BioGRID" id="4262054">
    <property type="interactions" value="38"/>
</dbReference>
<dbReference type="DIP" id="DIP-48035N"/>
<dbReference type="FunCoup" id="P0AD05">
    <property type="interactions" value="31"/>
</dbReference>
<dbReference type="IntAct" id="P0AD05">
    <property type="interactions" value="21"/>
</dbReference>
<dbReference type="STRING" id="511145.b1908"/>
<dbReference type="jPOST" id="P0AD05"/>
<dbReference type="PaxDb" id="511145-b1908"/>
<dbReference type="EnsemblBacteria" id="AAC74978">
    <property type="protein sequence ID" value="AAC74978"/>
    <property type="gene ID" value="b1908"/>
</dbReference>
<dbReference type="GeneID" id="75202689"/>
<dbReference type="GeneID" id="945061"/>
<dbReference type="KEGG" id="ecj:JW1896"/>
<dbReference type="KEGG" id="eco:b1908"/>
<dbReference type="KEGG" id="ecoc:C3026_10830"/>
<dbReference type="PATRIC" id="fig|511145.12.peg.1991"/>
<dbReference type="EchoBASE" id="EB1129"/>
<dbReference type="eggNOG" id="COG3012">
    <property type="taxonomic scope" value="Bacteria"/>
</dbReference>
<dbReference type="eggNOG" id="COG3318">
    <property type="taxonomic scope" value="Bacteria"/>
</dbReference>
<dbReference type="HOGENOM" id="CLU_078487_0_1_6"/>
<dbReference type="InParanoid" id="P0AD05"/>
<dbReference type="OMA" id="WCFGYLR"/>
<dbReference type="OrthoDB" id="570299at2"/>
<dbReference type="PhylomeDB" id="P0AD05"/>
<dbReference type="BioCyc" id="EcoCyc:EG11139-MONOMER"/>
<dbReference type="PRO" id="PR:P0AD05"/>
<dbReference type="Proteomes" id="UP000000625">
    <property type="component" value="Chromosome"/>
</dbReference>
<dbReference type="GO" id="GO:0005506">
    <property type="term" value="F:iron ion binding"/>
    <property type="evidence" value="ECO:0000314"/>
    <property type="project" value="EcoCyc"/>
</dbReference>
<dbReference type="Gene3D" id="1.20.120.740">
    <property type="entry name" value="YgfB uncharacterised protein family UPF0149, PF03695"/>
    <property type="match status" value="1"/>
</dbReference>
<dbReference type="InterPro" id="IPR004027">
    <property type="entry name" value="SEC_C_motif"/>
</dbReference>
<dbReference type="InterPro" id="IPR011978">
    <property type="entry name" value="YgfB-like"/>
</dbReference>
<dbReference type="InterPro" id="IPR036255">
    <property type="entry name" value="YgfB-like_sf"/>
</dbReference>
<dbReference type="NCBIfam" id="NF007704">
    <property type="entry name" value="PRK10396.1"/>
    <property type="match status" value="1"/>
</dbReference>
<dbReference type="NCBIfam" id="TIGR02292">
    <property type="entry name" value="ygfB_yecA"/>
    <property type="match status" value="1"/>
</dbReference>
<dbReference type="PANTHER" id="PTHR33747:SF9">
    <property type="entry name" value="METAL-BINDING PROTEIN"/>
    <property type="match status" value="1"/>
</dbReference>
<dbReference type="PANTHER" id="PTHR33747">
    <property type="entry name" value="UPF0225 PROTEIN SCO1677"/>
    <property type="match status" value="1"/>
</dbReference>
<dbReference type="Pfam" id="PF02810">
    <property type="entry name" value="SEC-C"/>
    <property type="match status" value="1"/>
</dbReference>
<dbReference type="Pfam" id="PF03695">
    <property type="entry name" value="UPF0149"/>
    <property type="match status" value="1"/>
</dbReference>
<dbReference type="SUPFAM" id="SSF103642">
    <property type="entry name" value="Sec-C motif"/>
    <property type="match status" value="1"/>
</dbReference>
<dbReference type="SUPFAM" id="SSF101327">
    <property type="entry name" value="YgfB-like"/>
    <property type="match status" value="1"/>
</dbReference>
<accession>P0AD05</accession>
<accession>P06979</accession>
<accession>P76310</accession>
<reference key="1">
    <citation type="journal article" date="1996" name="DNA Res.">
        <title>A 460-kb DNA sequence of the Escherichia coli K-12 genome corresponding to the 40.1-50.0 min region on the linkage map.</title>
        <authorList>
            <person name="Itoh T."/>
            <person name="Aiba H."/>
            <person name="Baba T."/>
            <person name="Fujita K."/>
            <person name="Hayashi K."/>
            <person name="Inada T."/>
            <person name="Isono K."/>
            <person name="Kasai H."/>
            <person name="Kimura S."/>
            <person name="Kitakawa M."/>
            <person name="Kitagawa M."/>
            <person name="Makino K."/>
            <person name="Miki T."/>
            <person name="Mizobuchi K."/>
            <person name="Mori H."/>
            <person name="Mori T."/>
            <person name="Motomura K."/>
            <person name="Nakade S."/>
            <person name="Nakamura Y."/>
            <person name="Nashimoto H."/>
            <person name="Nishio Y."/>
            <person name="Oshima T."/>
            <person name="Saito N."/>
            <person name="Sampei G."/>
            <person name="Seki Y."/>
            <person name="Sivasundaram S."/>
            <person name="Tagami H."/>
            <person name="Takeda J."/>
            <person name="Takemoto K."/>
            <person name="Wada C."/>
            <person name="Yamamoto Y."/>
            <person name="Horiuchi T."/>
        </authorList>
    </citation>
    <scope>NUCLEOTIDE SEQUENCE [LARGE SCALE GENOMIC DNA]</scope>
    <source>
        <strain>K12 / W3110 / ATCC 27325 / DSM 5911</strain>
    </source>
</reference>
<reference key="2">
    <citation type="journal article" date="1997" name="Science">
        <title>The complete genome sequence of Escherichia coli K-12.</title>
        <authorList>
            <person name="Blattner F.R."/>
            <person name="Plunkett G. III"/>
            <person name="Bloch C.A."/>
            <person name="Perna N.T."/>
            <person name="Burland V."/>
            <person name="Riley M."/>
            <person name="Collado-Vides J."/>
            <person name="Glasner J.D."/>
            <person name="Rode C.K."/>
            <person name="Mayhew G.F."/>
            <person name="Gregor J."/>
            <person name="Davis N.W."/>
            <person name="Kirkpatrick H.A."/>
            <person name="Goeden M.A."/>
            <person name="Rose D.J."/>
            <person name="Mau B."/>
            <person name="Shao Y."/>
        </authorList>
    </citation>
    <scope>NUCLEOTIDE SEQUENCE [LARGE SCALE GENOMIC DNA]</scope>
    <source>
        <strain>K12 / MG1655 / ATCC 47076</strain>
    </source>
</reference>
<reference key="3">
    <citation type="journal article" date="2006" name="Mol. Syst. Biol.">
        <title>Highly accurate genome sequences of Escherichia coli K-12 strains MG1655 and W3110.</title>
        <authorList>
            <person name="Hayashi K."/>
            <person name="Morooka N."/>
            <person name="Yamamoto Y."/>
            <person name="Fujita K."/>
            <person name="Isono K."/>
            <person name="Choi S."/>
            <person name="Ohtsubo E."/>
            <person name="Baba T."/>
            <person name="Wanner B.L."/>
            <person name="Mori H."/>
            <person name="Horiuchi T."/>
        </authorList>
    </citation>
    <scope>NUCLEOTIDE SEQUENCE [LARGE SCALE GENOMIC DNA]</scope>
    <source>
        <strain>K12 / W3110 / ATCC 27325 / DSM 5911</strain>
    </source>
</reference>
<reference key="4">
    <citation type="journal article" date="1985" name="Biochimie">
        <title>Sequence analysis of the glyW region in Escherichia coli.</title>
        <authorList>
            <person name="Tucker S.D."/>
            <person name="Murgola E.J."/>
        </authorList>
    </citation>
    <scope>NUCLEOTIDE SEQUENCE [GENOMIC DNA] OF 1-76</scope>
</reference>
<sequence length="221" mass="25039">MKTGPLNESELEWLDDILTKYNTDHAILDVAELDGLLTAVLSSPQEIEPEQWLVAVWGGADYVPRWASEKEMTRFMNLAFQHMADTAERLNEFPEQFEPLFGLREVDGSELTIVEEWCFGYMRGVALSDWSTLPDSLKPALEAIALHGTEENFERVEKMSPEAFEESVDAIRLAALDLHAYWMAHPQEKAVQQPIKAEEKPGRNDPCPCGSGKKFKQCCLH</sequence>
<protein>
    <recommendedName>
        <fullName>Uncharacterized protein YecA</fullName>
    </recommendedName>
</protein>
<organism>
    <name type="scientific">Escherichia coli (strain K12)</name>
    <dbReference type="NCBI Taxonomy" id="83333"/>
    <lineage>
        <taxon>Bacteria</taxon>
        <taxon>Pseudomonadati</taxon>
        <taxon>Pseudomonadota</taxon>
        <taxon>Gammaproteobacteria</taxon>
        <taxon>Enterobacterales</taxon>
        <taxon>Enterobacteriaceae</taxon>
        <taxon>Escherichia</taxon>
    </lineage>
</organism>
<proteinExistence type="predicted"/>
<gene>
    <name type="primary">yecA</name>
    <name type="ordered locus">b1908</name>
    <name type="ordered locus">JW1896</name>
</gene>
<evidence type="ECO:0000305" key="1"/>
<keyword id="KW-1185">Reference proteome</keyword>
<name>YECA_ECOLI</name>